<proteinExistence type="inferred from homology"/>
<reference key="1">
    <citation type="journal article" date="2006" name="Genome Res.">
        <title>Skewed genomic variability in strains of the toxigenic bacterial pathogen, Clostridium perfringens.</title>
        <authorList>
            <person name="Myers G.S.A."/>
            <person name="Rasko D.A."/>
            <person name="Cheung J.K."/>
            <person name="Ravel J."/>
            <person name="Seshadri R."/>
            <person name="DeBoy R.T."/>
            <person name="Ren Q."/>
            <person name="Varga J."/>
            <person name="Awad M.M."/>
            <person name="Brinkac L.M."/>
            <person name="Daugherty S.C."/>
            <person name="Haft D.H."/>
            <person name="Dodson R.J."/>
            <person name="Madupu R."/>
            <person name="Nelson W.C."/>
            <person name="Rosovitz M.J."/>
            <person name="Sullivan S.A."/>
            <person name="Khouri H."/>
            <person name="Dimitrov G.I."/>
            <person name="Watkins K.L."/>
            <person name="Mulligan S."/>
            <person name="Benton J."/>
            <person name="Radune D."/>
            <person name="Fisher D.J."/>
            <person name="Atkins H.S."/>
            <person name="Hiscox T."/>
            <person name="Jost B.H."/>
            <person name="Billington S.J."/>
            <person name="Songer J.G."/>
            <person name="McClane B.A."/>
            <person name="Titball R.W."/>
            <person name="Rood J.I."/>
            <person name="Melville S.B."/>
            <person name="Paulsen I.T."/>
        </authorList>
    </citation>
    <scope>NUCLEOTIDE SEQUENCE [LARGE SCALE GENOMIC DNA]</scope>
    <source>
        <strain>SM101 / Type A</strain>
    </source>
</reference>
<evidence type="ECO:0000255" key="1">
    <source>
        <dbReference type="HAMAP-Rule" id="MF_00245"/>
    </source>
</evidence>
<gene>
    <name type="ordered locus">CPR_1686</name>
</gene>
<dbReference type="EMBL" id="CP000312">
    <property type="protein sequence ID" value="ABG85326.1"/>
    <property type="molecule type" value="Genomic_DNA"/>
</dbReference>
<dbReference type="RefSeq" id="WP_003449465.1">
    <property type="nucleotide sequence ID" value="NC_008262.1"/>
</dbReference>
<dbReference type="SMR" id="Q0SSA6"/>
<dbReference type="KEGG" id="cpr:CPR_1686"/>
<dbReference type="BioCyc" id="CPER289380:GI76-1697-MONOMER"/>
<dbReference type="Proteomes" id="UP000001824">
    <property type="component" value="Chromosome"/>
</dbReference>
<dbReference type="Gene3D" id="1.10.10.10">
    <property type="entry name" value="Winged helix-like DNA-binding domain superfamily/Winged helix DNA-binding domain"/>
    <property type="match status" value="1"/>
</dbReference>
<dbReference type="HAMAP" id="MF_00245">
    <property type="entry name" value="UPF0122"/>
    <property type="match status" value="1"/>
</dbReference>
<dbReference type="InterPro" id="IPR013324">
    <property type="entry name" value="RNA_pol_sigma_r3/r4-like"/>
</dbReference>
<dbReference type="InterPro" id="IPR007394">
    <property type="entry name" value="UPF0122"/>
</dbReference>
<dbReference type="InterPro" id="IPR054831">
    <property type="entry name" value="UPF0122_fam_protein"/>
</dbReference>
<dbReference type="InterPro" id="IPR036388">
    <property type="entry name" value="WH-like_DNA-bd_sf"/>
</dbReference>
<dbReference type="NCBIfam" id="NF001072">
    <property type="entry name" value="PRK00118.2-2"/>
    <property type="match status" value="1"/>
</dbReference>
<dbReference type="NCBIfam" id="NF045758">
    <property type="entry name" value="YlxM"/>
    <property type="match status" value="1"/>
</dbReference>
<dbReference type="PANTHER" id="PTHR40083">
    <property type="entry name" value="UPF0122 PROTEIN CBO2450/CLC_2298"/>
    <property type="match status" value="1"/>
</dbReference>
<dbReference type="PANTHER" id="PTHR40083:SF1">
    <property type="entry name" value="UPF0122 PROTEIN YLXM"/>
    <property type="match status" value="1"/>
</dbReference>
<dbReference type="Pfam" id="PF04297">
    <property type="entry name" value="UPF0122"/>
    <property type="match status" value="1"/>
</dbReference>
<dbReference type="SUPFAM" id="SSF88659">
    <property type="entry name" value="Sigma3 and sigma4 domains of RNA polymerase sigma factors"/>
    <property type="match status" value="1"/>
</dbReference>
<name>Y1686_CLOPS</name>
<comment type="function">
    <text evidence="1">Might take part in the signal recognition particle (SRP) pathway. This is inferred from the conservation of its genetic proximity to ftsY/ffh. May be a regulatory protein.</text>
</comment>
<comment type="similarity">
    <text evidence="1">Belongs to the UPF0122 family.</text>
</comment>
<feature type="chain" id="PRO_1000012526" description="UPF0122 protein CPR_1686">
    <location>
        <begin position="1"/>
        <end position="112"/>
    </location>
</feature>
<organism>
    <name type="scientific">Clostridium perfringens (strain SM101 / Type A)</name>
    <dbReference type="NCBI Taxonomy" id="289380"/>
    <lineage>
        <taxon>Bacteria</taxon>
        <taxon>Bacillati</taxon>
        <taxon>Bacillota</taxon>
        <taxon>Clostridia</taxon>
        <taxon>Eubacteriales</taxon>
        <taxon>Clostridiaceae</taxon>
        <taxon>Clostridium</taxon>
    </lineage>
</organism>
<accession>Q0SSA6</accession>
<sequence length="112" mass="13437">MENRFEISMLIDYYGTLLTEKQFNVMTLYYNEDLSLAEIAEINKTSRQAIYDLIKRCSKQLHSYDEKLKLSKKVDKRYRIKEELMAELNKNSNLDEDIKKYIDEKLEEIINA</sequence>
<protein>
    <recommendedName>
        <fullName evidence="1">UPF0122 protein CPR_1686</fullName>
    </recommendedName>
</protein>